<organism>
    <name type="scientific">Salmonella paratyphi A (strain ATCC 9150 / SARB42)</name>
    <dbReference type="NCBI Taxonomy" id="295319"/>
    <lineage>
        <taxon>Bacteria</taxon>
        <taxon>Pseudomonadati</taxon>
        <taxon>Pseudomonadota</taxon>
        <taxon>Gammaproteobacteria</taxon>
        <taxon>Enterobacterales</taxon>
        <taxon>Enterobacteriaceae</taxon>
        <taxon>Salmonella</taxon>
    </lineage>
</organism>
<protein>
    <recommendedName>
        <fullName evidence="1">Recombination protein RecR</fullName>
    </recommendedName>
</protein>
<dbReference type="EMBL" id="CP000026">
    <property type="protein sequence ID" value="AAV78122.1"/>
    <property type="molecule type" value="Genomic_DNA"/>
</dbReference>
<dbReference type="RefSeq" id="WP_001195023.1">
    <property type="nucleotide sequence ID" value="NC_006511.1"/>
</dbReference>
<dbReference type="SMR" id="Q5PFK6"/>
<dbReference type="KEGG" id="spt:SPA2236"/>
<dbReference type="HOGENOM" id="CLU_060739_1_2_6"/>
<dbReference type="Proteomes" id="UP000008185">
    <property type="component" value="Chromosome"/>
</dbReference>
<dbReference type="GO" id="GO:0003677">
    <property type="term" value="F:DNA binding"/>
    <property type="evidence" value="ECO:0007669"/>
    <property type="project" value="UniProtKB-UniRule"/>
</dbReference>
<dbReference type="GO" id="GO:0008270">
    <property type="term" value="F:zinc ion binding"/>
    <property type="evidence" value="ECO:0007669"/>
    <property type="project" value="UniProtKB-KW"/>
</dbReference>
<dbReference type="GO" id="GO:0006310">
    <property type="term" value="P:DNA recombination"/>
    <property type="evidence" value="ECO:0007669"/>
    <property type="project" value="UniProtKB-UniRule"/>
</dbReference>
<dbReference type="GO" id="GO:0006281">
    <property type="term" value="P:DNA repair"/>
    <property type="evidence" value="ECO:0007669"/>
    <property type="project" value="UniProtKB-UniRule"/>
</dbReference>
<dbReference type="CDD" id="cd01025">
    <property type="entry name" value="TOPRIM_recR"/>
    <property type="match status" value="1"/>
</dbReference>
<dbReference type="FunFam" id="1.10.8.420:FF:000001">
    <property type="entry name" value="Recombination protein RecR"/>
    <property type="match status" value="1"/>
</dbReference>
<dbReference type="FunFam" id="3.40.1360.10:FF:000001">
    <property type="entry name" value="Recombination protein RecR"/>
    <property type="match status" value="1"/>
</dbReference>
<dbReference type="Gene3D" id="3.40.1360.10">
    <property type="match status" value="1"/>
</dbReference>
<dbReference type="Gene3D" id="6.10.250.240">
    <property type="match status" value="1"/>
</dbReference>
<dbReference type="Gene3D" id="1.10.8.420">
    <property type="entry name" value="RecR Domain 1"/>
    <property type="match status" value="1"/>
</dbReference>
<dbReference type="HAMAP" id="MF_00017">
    <property type="entry name" value="RecR"/>
    <property type="match status" value="1"/>
</dbReference>
<dbReference type="InterPro" id="IPR000093">
    <property type="entry name" value="DNA_Rcmb_RecR"/>
</dbReference>
<dbReference type="InterPro" id="IPR023627">
    <property type="entry name" value="Rcmb_RecR"/>
</dbReference>
<dbReference type="InterPro" id="IPR015967">
    <property type="entry name" value="Rcmb_RecR_Znf"/>
</dbReference>
<dbReference type="InterPro" id="IPR006171">
    <property type="entry name" value="TOPRIM_dom"/>
</dbReference>
<dbReference type="InterPro" id="IPR034137">
    <property type="entry name" value="TOPRIM_RecR"/>
</dbReference>
<dbReference type="NCBIfam" id="TIGR00615">
    <property type="entry name" value="recR"/>
    <property type="match status" value="1"/>
</dbReference>
<dbReference type="PANTHER" id="PTHR30446">
    <property type="entry name" value="RECOMBINATION PROTEIN RECR"/>
    <property type="match status" value="1"/>
</dbReference>
<dbReference type="PANTHER" id="PTHR30446:SF0">
    <property type="entry name" value="RECOMBINATION PROTEIN RECR"/>
    <property type="match status" value="1"/>
</dbReference>
<dbReference type="Pfam" id="PF21175">
    <property type="entry name" value="RecR_C"/>
    <property type="match status" value="1"/>
</dbReference>
<dbReference type="Pfam" id="PF21176">
    <property type="entry name" value="RecR_HhH"/>
    <property type="match status" value="1"/>
</dbReference>
<dbReference type="Pfam" id="PF02132">
    <property type="entry name" value="RecR_ZnF"/>
    <property type="match status" value="1"/>
</dbReference>
<dbReference type="Pfam" id="PF13662">
    <property type="entry name" value="Toprim_4"/>
    <property type="match status" value="1"/>
</dbReference>
<dbReference type="SMART" id="SM00493">
    <property type="entry name" value="TOPRIM"/>
    <property type="match status" value="1"/>
</dbReference>
<dbReference type="SUPFAM" id="SSF111304">
    <property type="entry name" value="Recombination protein RecR"/>
    <property type="match status" value="1"/>
</dbReference>
<dbReference type="PROSITE" id="PS01300">
    <property type="entry name" value="RECR"/>
    <property type="match status" value="1"/>
</dbReference>
<dbReference type="PROSITE" id="PS50880">
    <property type="entry name" value="TOPRIM"/>
    <property type="match status" value="1"/>
</dbReference>
<name>RECR_SALPA</name>
<evidence type="ECO:0000255" key="1">
    <source>
        <dbReference type="HAMAP-Rule" id="MF_00017"/>
    </source>
</evidence>
<keyword id="KW-0227">DNA damage</keyword>
<keyword id="KW-0233">DNA recombination</keyword>
<keyword id="KW-0234">DNA repair</keyword>
<keyword id="KW-0479">Metal-binding</keyword>
<keyword id="KW-0862">Zinc</keyword>
<keyword id="KW-0863">Zinc-finger</keyword>
<proteinExistence type="inferred from homology"/>
<feature type="chain" id="PRO_0000190379" description="Recombination protein RecR">
    <location>
        <begin position="1"/>
        <end position="201"/>
    </location>
</feature>
<feature type="domain" description="Toprim" evidence="1">
    <location>
        <begin position="81"/>
        <end position="176"/>
    </location>
</feature>
<feature type="zinc finger region" description="C4-type" evidence="1">
    <location>
        <begin position="57"/>
        <end position="72"/>
    </location>
</feature>
<accession>Q5PFK6</accession>
<sequence>MQTSPLLTQLMEALRCLPGVGPKSAQRMAFTLLQRDRSGGMRLAQALTRAMSEIGHCADCRTFTEQDVCNICSNPRRQENGQICVVESPADIYAIEQTGQFSGRYFVLMGHLSPLDGIGPDDIGLDRLEQRLASEKISELILATNPTVEGEATANYIAELCAEAGVEASRIAHGVPVGGELEMVDGTTLSHSLAGRHKIIF</sequence>
<comment type="function">
    <text evidence="1">May play a role in DNA repair. It seems to be involved in an RecBC-independent recombinational process of DNA repair. It may act with RecF and RecO.</text>
</comment>
<comment type="similarity">
    <text evidence="1">Belongs to the RecR family.</text>
</comment>
<reference key="1">
    <citation type="journal article" date="2004" name="Nat. Genet.">
        <title>Comparison of genome degradation in Paratyphi A and Typhi, human-restricted serovars of Salmonella enterica that cause typhoid.</title>
        <authorList>
            <person name="McClelland M."/>
            <person name="Sanderson K.E."/>
            <person name="Clifton S.W."/>
            <person name="Latreille P."/>
            <person name="Porwollik S."/>
            <person name="Sabo A."/>
            <person name="Meyer R."/>
            <person name="Bieri T."/>
            <person name="Ozersky P."/>
            <person name="McLellan M."/>
            <person name="Harkins C.R."/>
            <person name="Wang C."/>
            <person name="Nguyen C."/>
            <person name="Berghoff A."/>
            <person name="Elliott G."/>
            <person name="Kohlberg S."/>
            <person name="Strong C."/>
            <person name="Du F."/>
            <person name="Carter J."/>
            <person name="Kremizki C."/>
            <person name="Layman D."/>
            <person name="Leonard S."/>
            <person name="Sun H."/>
            <person name="Fulton L."/>
            <person name="Nash W."/>
            <person name="Miner T."/>
            <person name="Minx P."/>
            <person name="Delehaunty K."/>
            <person name="Fronick C."/>
            <person name="Magrini V."/>
            <person name="Nhan M."/>
            <person name="Warren W."/>
            <person name="Florea L."/>
            <person name="Spieth J."/>
            <person name="Wilson R.K."/>
        </authorList>
    </citation>
    <scope>NUCLEOTIDE SEQUENCE [LARGE SCALE GENOMIC DNA]</scope>
    <source>
        <strain>ATCC 9150 / SARB42</strain>
    </source>
</reference>
<gene>
    <name evidence="1" type="primary">recR</name>
    <name type="ordered locus">SPA2236</name>
</gene>